<comment type="function">
    <text evidence="3 4 7 8 9">Sphingosine-1-phosphate lyase that cleaves phosphorylated sphingoid bases (PSBs), such as sphingosine-1-phosphate, into fatty aldehydes and phosphoethanolamine (PubMed:20696404, PubMed:25345524, PubMed:9334171). Prefers C-16 dihydrosphingosine-l-phosphate (DHS-P) as a substrate. Regulates intracellular levels of sphingolipid long-chain base phosphates (LCBPs) (PubMed:11795842). Plays a role in the regulation of global responses to nutrient deprivation in yeast (PubMed:10329480).</text>
</comment>
<comment type="catalytic activity">
    <reaction evidence="7 8 9 10">
        <text>sphinganine 1-phosphate = hexadecanal + phosphoethanolamine</text>
        <dbReference type="Rhea" id="RHEA:18593"/>
        <dbReference type="ChEBI" id="CHEBI:17600"/>
        <dbReference type="ChEBI" id="CHEBI:57939"/>
        <dbReference type="ChEBI" id="CHEBI:58190"/>
        <dbReference type="EC" id="4.1.2.27"/>
    </reaction>
    <physiologicalReaction direction="left-to-right" evidence="7 8 15 16">
        <dbReference type="Rhea" id="RHEA:18594"/>
    </physiologicalReaction>
</comment>
<comment type="catalytic activity">
    <reaction evidence="6 8">
        <text>(4R)-hydroxysphinganine 1-phosphate = (2R)-hydroxyhexadecanal + phosphoethanolamine</text>
        <dbReference type="Rhea" id="RHEA:55208"/>
        <dbReference type="ChEBI" id="CHEBI:58190"/>
        <dbReference type="ChEBI" id="CHEBI:64795"/>
        <dbReference type="ChEBI" id="CHEBI:138635"/>
    </reaction>
    <physiologicalReaction direction="left-to-right" evidence="8 14">
        <dbReference type="Rhea" id="RHEA:55209"/>
    </physiologicalReaction>
</comment>
<comment type="cofactor">
    <cofactor evidence="7">
        <name>pyridoxal 5'-phosphate</name>
        <dbReference type="ChEBI" id="CHEBI:597326"/>
    </cofactor>
</comment>
<comment type="biophysicochemical properties">
    <kinetics>
        <KM evidence="8">19.6 uM for dihydrosphingosin 1-phosphate</KM>
        <KM evidence="8">10.6 uM for phytosphingosin 1-phosphate</KM>
        <Vmax evidence="8">28.3 nmol/min/ug enzyme toward dihydrosphingosin 1-phosphate</Vmax>
        <Vmax evidence="8">8.9 nmol/min/ug enzyme toward phytosphingosin 1-phosphate</Vmax>
    </kinetics>
</comment>
<comment type="pathway">
    <text>Lipid metabolism; sphingolipid metabolism.</text>
</comment>
<comment type="subunit">
    <text evidence="7">Homodimer.</text>
</comment>
<comment type="interaction">
    <interactant intactId="EBI-33743">
        <id>Q05567</id>
    </interactant>
    <interactant intactId="EBI-33743">
        <id>Q05567</id>
        <label>DPL1</label>
    </interactant>
    <organismsDiffer>false</organismsDiffer>
    <experiments>3</experiments>
</comment>
<comment type="subcellular location">
    <subcellularLocation>
        <location evidence="6">Endoplasmic reticulum membrane</location>
        <topology evidence="1">Single-pass type I membrane protein</topology>
    </subcellularLocation>
    <text evidence="6">Localizes to the cortical and the perinuclear ER.</text>
</comment>
<comment type="PTM">
    <text evidence="6">Glycosylated.</text>
</comment>
<comment type="disruption phenotype">
    <text evidence="3 8">Leads to the accumulation of endogenous phosphorylated sphingoid bases, and exhibits unregulated proliferation upon approach to stationary phase (PubMed:10329480). Causes a reduction in total C15 and C17 phosphatidylcholine levels (PubMed:25345524).</text>
</comment>
<comment type="miscellaneous">
    <text evidence="5">Present with 13100 molecules/cell in log phase SD medium.</text>
</comment>
<comment type="similarity">
    <text evidence="13">Belongs to the group II decarboxylase family. Sphingosine-1-phosphate lyase subfamily.</text>
</comment>
<organism>
    <name type="scientific">Saccharomyces cerevisiae (strain ATCC 204508 / S288c)</name>
    <name type="common">Baker's yeast</name>
    <dbReference type="NCBI Taxonomy" id="559292"/>
    <lineage>
        <taxon>Eukaryota</taxon>
        <taxon>Fungi</taxon>
        <taxon>Dikarya</taxon>
        <taxon>Ascomycota</taxon>
        <taxon>Saccharomycotina</taxon>
        <taxon>Saccharomycetes</taxon>
        <taxon>Saccharomycetales</taxon>
        <taxon>Saccharomycetaceae</taxon>
        <taxon>Saccharomyces</taxon>
    </lineage>
</organism>
<sequence length="589" mass="65566">MSGVSNKTVSINGWYGMPIHLLREEGDFAQFMILTINELKIAIHGYLRNTPWYNMLKDYLFVIFCYKLISNFFYLLKVYGPVRLAVRTYEHSSRRLFRWLLDSPFLRGTVEKEVTKVKQSIEDELIRSDSQLMNFPQLPSNGIPQDDVIEELNKLNDLIPHTQWKEGKVSGAVYHGGDDLIHLQTIAYEKYCVANQLHPDVFPAVRKMESEVVSMVLRMFNAPSDTGCGTTTSGGTESLLLACLSAKMYALHHRGITEPEIIAPVTAHAGFDKAAYYFGMKLRHVELDPTTYQVDLGKVKKFINKNTILLVGSAPNFPHGIADDIEGLGKIAQKYKLPLHVDSCLGSFIVSFMEKAGYKNLPLLDFRVPGVTSISCDTHKYGFAPKGSSVIMYRNSDLRMHQYYVNPAWTGGLYGSPTLAGSRPGAIVVGCWATMVNMGENGYIESCQEIVGAAMKFKKYIQENIPDLNIMGNPRYSVISFSSKTLNIHELSDRLSKKGWHFNALQKPVALHMAFTRLSAHVVDEICDILRTTVQELKSESNSKPSPDGTSALYGVAGSVKTAGVADKLIVGFLDALYKLGPGEDTATK</sequence>
<dbReference type="EC" id="4.1.2.-" evidence="8"/>
<dbReference type="EC" id="4.1.2.27" evidence="7 8"/>
<dbReference type="EMBL" id="U51031">
    <property type="protein sequence ID" value="AAB64470.1"/>
    <property type="molecule type" value="Genomic_DNA"/>
</dbReference>
<dbReference type="EMBL" id="BK006938">
    <property type="protein sequence ID" value="DAA12133.1"/>
    <property type="molecule type" value="Genomic_DNA"/>
</dbReference>
<dbReference type="PIR" id="S70123">
    <property type="entry name" value="S70123"/>
</dbReference>
<dbReference type="RefSeq" id="NP_010580.1">
    <property type="nucleotide sequence ID" value="NM_001180602.1"/>
</dbReference>
<dbReference type="PDB" id="3MC6">
    <property type="method" value="X-ray"/>
    <property type="resolution" value="3.15 A"/>
    <property type="chains" value="A/C=103-589"/>
</dbReference>
<dbReference type="PDBsum" id="3MC6"/>
<dbReference type="SMR" id="Q05567"/>
<dbReference type="BioGRID" id="32346">
    <property type="interactions" value="171"/>
</dbReference>
<dbReference type="DIP" id="DIP-49371N"/>
<dbReference type="FunCoup" id="Q05567">
    <property type="interactions" value="885"/>
</dbReference>
<dbReference type="IntAct" id="Q05567">
    <property type="interactions" value="4"/>
</dbReference>
<dbReference type="STRING" id="4932.YDR294C"/>
<dbReference type="SwissLipids" id="SLP:000000071"/>
<dbReference type="SwissLipids" id="SLP:000000196"/>
<dbReference type="GlyCosmos" id="Q05567">
    <property type="glycosylation" value="1 site, No reported glycans"/>
</dbReference>
<dbReference type="GlyGen" id="Q05567">
    <property type="glycosylation" value="1 site"/>
</dbReference>
<dbReference type="iPTMnet" id="Q05567"/>
<dbReference type="PaxDb" id="4932-YDR294C"/>
<dbReference type="PeptideAtlas" id="Q05567"/>
<dbReference type="EnsemblFungi" id="YDR294C_mRNA">
    <property type="protein sequence ID" value="YDR294C"/>
    <property type="gene ID" value="YDR294C"/>
</dbReference>
<dbReference type="GeneID" id="851888"/>
<dbReference type="KEGG" id="sce:YDR294C"/>
<dbReference type="AGR" id="SGD:S000002702"/>
<dbReference type="SGD" id="S000002702">
    <property type="gene designation" value="DPL1"/>
</dbReference>
<dbReference type="VEuPathDB" id="FungiDB:YDR294C"/>
<dbReference type="eggNOG" id="KOG1383">
    <property type="taxonomic scope" value="Eukaryota"/>
</dbReference>
<dbReference type="GeneTree" id="ENSGT00390000000046"/>
<dbReference type="HOGENOM" id="CLU_028929_1_0_1"/>
<dbReference type="InParanoid" id="Q05567"/>
<dbReference type="OMA" id="FKDHQFT"/>
<dbReference type="OrthoDB" id="10254570at2759"/>
<dbReference type="BioCyc" id="MetaCyc:YDR294C-MONOMER"/>
<dbReference type="BioCyc" id="YEAST:YDR294C-MONOMER"/>
<dbReference type="BRENDA" id="4.1.2.27">
    <property type="organism ID" value="984"/>
</dbReference>
<dbReference type="Reactome" id="R-SCE-9845614">
    <property type="pathway name" value="Sphingolipid catabolism"/>
</dbReference>
<dbReference type="UniPathway" id="UPA00222"/>
<dbReference type="BioGRID-ORCS" id="851888">
    <property type="hits" value="2 hits in 10 CRISPR screens"/>
</dbReference>
<dbReference type="EvolutionaryTrace" id="Q05567"/>
<dbReference type="PRO" id="PR:Q05567"/>
<dbReference type="Proteomes" id="UP000002311">
    <property type="component" value="Chromosome IV"/>
</dbReference>
<dbReference type="RNAct" id="Q05567">
    <property type="molecule type" value="protein"/>
</dbReference>
<dbReference type="GO" id="GO:0032541">
    <property type="term" value="C:cortical endoplasmic reticulum"/>
    <property type="evidence" value="ECO:0000314"/>
    <property type="project" value="SGD"/>
</dbReference>
<dbReference type="GO" id="GO:0005783">
    <property type="term" value="C:endoplasmic reticulum"/>
    <property type="evidence" value="ECO:0007005"/>
    <property type="project" value="SGD"/>
</dbReference>
<dbReference type="GO" id="GO:0005789">
    <property type="term" value="C:endoplasmic reticulum membrane"/>
    <property type="evidence" value="ECO:0007669"/>
    <property type="project" value="UniProtKB-SubCell"/>
</dbReference>
<dbReference type="GO" id="GO:0097038">
    <property type="term" value="C:perinuclear endoplasmic reticulum"/>
    <property type="evidence" value="ECO:0000314"/>
    <property type="project" value="SGD"/>
</dbReference>
<dbReference type="GO" id="GO:0005777">
    <property type="term" value="C:peroxisome"/>
    <property type="evidence" value="ECO:0007005"/>
    <property type="project" value="SGD"/>
</dbReference>
<dbReference type="GO" id="GO:0042802">
    <property type="term" value="F:identical protein binding"/>
    <property type="evidence" value="ECO:0000353"/>
    <property type="project" value="IntAct"/>
</dbReference>
<dbReference type="GO" id="GO:0030170">
    <property type="term" value="F:pyridoxal phosphate binding"/>
    <property type="evidence" value="ECO:0007669"/>
    <property type="project" value="InterPro"/>
</dbReference>
<dbReference type="GO" id="GO:0008117">
    <property type="term" value="F:sphinganine-1-phosphate aldolase activity"/>
    <property type="evidence" value="ECO:0000314"/>
    <property type="project" value="SGD"/>
</dbReference>
<dbReference type="GO" id="GO:0019722">
    <property type="term" value="P:calcium-mediated signaling"/>
    <property type="evidence" value="ECO:0000315"/>
    <property type="project" value="SGD"/>
</dbReference>
<dbReference type="GO" id="GO:0019752">
    <property type="term" value="P:carboxylic acid metabolic process"/>
    <property type="evidence" value="ECO:0007669"/>
    <property type="project" value="InterPro"/>
</dbReference>
<dbReference type="GO" id="GO:0009267">
    <property type="term" value="P:cellular response to starvation"/>
    <property type="evidence" value="ECO:0000315"/>
    <property type="project" value="SGD"/>
</dbReference>
<dbReference type="GO" id="GO:0030149">
    <property type="term" value="P:sphingolipid catabolic process"/>
    <property type="evidence" value="ECO:0000318"/>
    <property type="project" value="GO_Central"/>
</dbReference>
<dbReference type="GO" id="GO:0006665">
    <property type="term" value="P:sphingolipid metabolic process"/>
    <property type="evidence" value="ECO:0000315"/>
    <property type="project" value="SGD"/>
</dbReference>
<dbReference type="CDD" id="cd06450">
    <property type="entry name" value="DOPA_deC_like"/>
    <property type="match status" value="1"/>
</dbReference>
<dbReference type="FunFam" id="6.10.140.2150:FF:000001">
    <property type="entry name" value="Sphingosine-1-phosphate lyase 1"/>
    <property type="match status" value="1"/>
</dbReference>
<dbReference type="FunFam" id="3.40.640.10:FF:000020">
    <property type="entry name" value="sphingosine-1-phosphate lyase 1"/>
    <property type="match status" value="1"/>
</dbReference>
<dbReference type="Gene3D" id="6.10.140.2150">
    <property type="match status" value="1"/>
</dbReference>
<dbReference type="Gene3D" id="3.90.1150.10">
    <property type="entry name" value="Aspartate Aminotransferase, domain 1"/>
    <property type="match status" value="1"/>
</dbReference>
<dbReference type="Gene3D" id="3.40.640.10">
    <property type="entry name" value="Type I PLP-dependent aspartate aminotransferase-like (Major domain)"/>
    <property type="match status" value="1"/>
</dbReference>
<dbReference type="InterPro" id="IPR050477">
    <property type="entry name" value="GrpII_AminoAcid_Decarb"/>
</dbReference>
<dbReference type="InterPro" id="IPR002129">
    <property type="entry name" value="PyrdxlP-dep_de-COase"/>
</dbReference>
<dbReference type="InterPro" id="IPR015424">
    <property type="entry name" value="PyrdxlP-dep_Trfase"/>
</dbReference>
<dbReference type="InterPro" id="IPR015421">
    <property type="entry name" value="PyrdxlP-dep_Trfase_major"/>
</dbReference>
<dbReference type="InterPro" id="IPR015422">
    <property type="entry name" value="PyrdxlP-dep_Trfase_small"/>
</dbReference>
<dbReference type="PANTHER" id="PTHR42735">
    <property type="match status" value="1"/>
</dbReference>
<dbReference type="PANTHER" id="PTHR42735:SF6">
    <property type="entry name" value="SPHINGOSINE-1-PHOSPHATE LYASE 1"/>
    <property type="match status" value="1"/>
</dbReference>
<dbReference type="Pfam" id="PF00282">
    <property type="entry name" value="Pyridoxal_deC"/>
    <property type="match status" value="1"/>
</dbReference>
<dbReference type="SUPFAM" id="SSF53383">
    <property type="entry name" value="PLP-dependent transferases"/>
    <property type="match status" value="1"/>
</dbReference>
<gene>
    <name evidence="11" type="primary">DPL1</name>
    <name evidence="12" type="synonym">BST1</name>
    <name type="ordered locus">YDR294C</name>
    <name type="ORF">D9819.5</name>
</gene>
<protein>
    <recommendedName>
        <fullName evidence="12">Sphingosine-1-phosphate lyase</fullName>
        <shortName evidence="12">S1PL</shortName>
        <shortName evidence="12">SP-lyase</shortName>
        <shortName evidence="12">ySPL</shortName>
        <ecNumber evidence="8">4.1.2.-</ecNumber>
        <ecNumber evidence="7 8">4.1.2.27</ecNumber>
    </recommendedName>
    <alternativeName>
        <fullName evidence="12">Bestowed of sphingosine tolerance 1</fullName>
    </alternativeName>
    <alternativeName>
        <fullName evidence="12">Sphingosine-1-phosphate aldolase</fullName>
    </alternativeName>
</protein>
<proteinExistence type="evidence at protein level"/>
<evidence type="ECO:0000255" key="1"/>
<evidence type="ECO:0000255" key="2">
    <source>
        <dbReference type="PROSITE-ProRule" id="PRU00498"/>
    </source>
</evidence>
<evidence type="ECO:0000269" key="3">
    <source>
    </source>
</evidence>
<evidence type="ECO:0000269" key="4">
    <source>
    </source>
</evidence>
<evidence type="ECO:0000269" key="5">
    <source>
    </source>
</evidence>
<evidence type="ECO:0000269" key="6">
    <source>
    </source>
</evidence>
<evidence type="ECO:0000269" key="7">
    <source>
    </source>
</evidence>
<evidence type="ECO:0000269" key="8">
    <source>
    </source>
</evidence>
<evidence type="ECO:0000269" key="9">
    <source>
    </source>
</evidence>
<evidence type="ECO:0000269" key="10">
    <source>
    </source>
</evidence>
<evidence type="ECO:0000303" key="11">
    <source>
    </source>
</evidence>
<evidence type="ECO:0000303" key="12">
    <source>
    </source>
</evidence>
<evidence type="ECO:0000305" key="13"/>
<evidence type="ECO:0000305" key="14">
    <source>
    </source>
</evidence>
<evidence type="ECO:0000305" key="15">
    <source>
    </source>
</evidence>
<evidence type="ECO:0000305" key="16">
    <source>
    </source>
</evidence>
<evidence type="ECO:0007829" key="17">
    <source>
        <dbReference type="PDB" id="3MC6"/>
    </source>
</evidence>
<reference key="1">
    <citation type="journal article" date="1997" name="Nature">
        <title>The nucleotide sequence of Saccharomyces cerevisiae chromosome IV.</title>
        <authorList>
            <person name="Jacq C."/>
            <person name="Alt-Moerbe J."/>
            <person name="Andre B."/>
            <person name="Arnold W."/>
            <person name="Bahr A."/>
            <person name="Ballesta J.P.G."/>
            <person name="Bargues M."/>
            <person name="Baron L."/>
            <person name="Becker A."/>
            <person name="Biteau N."/>
            <person name="Bloecker H."/>
            <person name="Blugeon C."/>
            <person name="Boskovic J."/>
            <person name="Brandt P."/>
            <person name="Brueckner M."/>
            <person name="Buitrago M.J."/>
            <person name="Coster F."/>
            <person name="Delaveau T."/>
            <person name="del Rey F."/>
            <person name="Dujon B."/>
            <person name="Eide L.G."/>
            <person name="Garcia-Cantalejo J.M."/>
            <person name="Goffeau A."/>
            <person name="Gomez-Peris A."/>
            <person name="Granotier C."/>
            <person name="Hanemann V."/>
            <person name="Hankeln T."/>
            <person name="Hoheisel J.D."/>
            <person name="Jaeger W."/>
            <person name="Jimenez A."/>
            <person name="Jonniaux J.-L."/>
            <person name="Kraemer C."/>
            <person name="Kuester H."/>
            <person name="Laamanen P."/>
            <person name="Legros Y."/>
            <person name="Louis E.J."/>
            <person name="Moeller-Rieker S."/>
            <person name="Monnet A."/>
            <person name="Moro M."/>
            <person name="Mueller-Auer S."/>
            <person name="Nussbaumer B."/>
            <person name="Paricio N."/>
            <person name="Paulin L."/>
            <person name="Perea J."/>
            <person name="Perez-Alonso M."/>
            <person name="Perez-Ortin J.E."/>
            <person name="Pohl T.M."/>
            <person name="Prydz H."/>
            <person name="Purnelle B."/>
            <person name="Rasmussen S.W."/>
            <person name="Remacha M.A."/>
            <person name="Revuelta J.L."/>
            <person name="Rieger M."/>
            <person name="Salom D."/>
            <person name="Saluz H.P."/>
            <person name="Saiz J.E."/>
            <person name="Saren A.-M."/>
            <person name="Schaefer M."/>
            <person name="Scharfe M."/>
            <person name="Schmidt E.R."/>
            <person name="Schneider C."/>
            <person name="Scholler P."/>
            <person name="Schwarz S."/>
            <person name="Soler-Mira A."/>
            <person name="Urrestarazu L.A."/>
            <person name="Verhasselt P."/>
            <person name="Vissers S."/>
            <person name="Voet M."/>
            <person name="Volckaert G."/>
            <person name="Wagner G."/>
            <person name="Wambutt R."/>
            <person name="Wedler E."/>
            <person name="Wedler H."/>
            <person name="Woelfl S."/>
            <person name="Harris D.E."/>
            <person name="Bowman S."/>
            <person name="Brown D."/>
            <person name="Churcher C.M."/>
            <person name="Connor R."/>
            <person name="Dedman K."/>
            <person name="Gentles S."/>
            <person name="Hamlin N."/>
            <person name="Hunt S."/>
            <person name="Jones L."/>
            <person name="McDonald S."/>
            <person name="Murphy L.D."/>
            <person name="Niblett D."/>
            <person name="Odell C."/>
            <person name="Oliver K."/>
            <person name="Rajandream M.A."/>
            <person name="Richards C."/>
            <person name="Shore L."/>
            <person name="Walsh S.V."/>
            <person name="Barrell B.G."/>
            <person name="Dietrich F.S."/>
            <person name="Mulligan J.T."/>
            <person name="Allen E."/>
            <person name="Araujo R."/>
            <person name="Aviles E."/>
            <person name="Berno A."/>
            <person name="Carpenter J."/>
            <person name="Chen E."/>
            <person name="Cherry J.M."/>
            <person name="Chung E."/>
            <person name="Duncan M."/>
            <person name="Hunicke-Smith S."/>
            <person name="Hyman R.W."/>
            <person name="Komp C."/>
            <person name="Lashkari D."/>
            <person name="Lew H."/>
            <person name="Lin D."/>
            <person name="Mosedale D."/>
            <person name="Nakahara K."/>
            <person name="Namath A."/>
            <person name="Oefner P."/>
            <person name="Oh C."/>
            <person name="Petel F.X."/>
            <person name="Roberts D."/>
            <person name="Schramm S."/>
            <person name="Schroeder M."/>
            <person name="Shogren T."/>
            <person name="Shroff N."/>
            <person name="Winant A."/>
            <person name="Yelton M.A."/>
            <person name="Botstein D."/>
            <person name="Davis R.W."/>
            <person name="Johnston M."/>
            <person name="Andrews S."/>
            <person name="Brinkman R."/>
            <person name="Cooper J."/>
            <person name="Ding H."/>
            <person name="Du Z."/>
            <person name="Favello A."/>
            <person name="Fulton L."/>
            <person name="Gattung S."/>
            <person name="Greco T."/>
            <person name="Hallsworth K."/>
            <person name="Hawkins J."/>
            <person name="Hillier L.W."/>
            <person name="Jier M."/>
            <person name="Johnson D."/>
            <person name="Johnston L."/>
            <person name="Kirsten J."/>
            <person name="Kucaba T."/>
            <person name="Langston Y."/>
            <person name="Latreille P."/>
            <person name="Le T."/>
            <person name="Mardis E."/>
            <person name="Menezes S."/>
            <person name="Miller N."/>
            <person name="Nhan M."/>
            <person name="Pauley A."/>
            <person name="Peluso D."/>
            <person name="Rifkin L."/>
            <person name="Riles L."/>
            <person name="Taich A."/>
            <person name="Trevaskis E."/>
            <person name="Vignati D."/>
            <person name="Wilcox L."/>
            <person name="Wohldman P."/>
            <person name="Vaudin M."/>
            <person name="Wilson R."/>
            <person name="Waterston R."/>
            <person name="Albermann K."/>
            <person name="Hani J."/>
            <person name="Heumann K."/>
            <person name="Kleine K."/>
            <person name="Mewes H.-W."/>
            <person name="Zollner A."/>
            <person name="Zaccaria P."/>
        </authorList>
    </citation>
    <scope>NUCLEOTIDE SEQUENCE [LARGE SCALE GENOMIC DNA]</scope>
    <source>
        <strain>ATCC 204508 / S288c</strain>
    </source>
</reference>
<reference key="2">
    <citation type="journal article" date="2014" name="G3 (Bethesda)">
        <title>The reference genome sequence of Saccharomyces cerevisiae: Then and now.</title>
        <authorList>
            <person name="Engel S.R."/>
            <person name="Dietrich F.S."/>
            <person name="Fisk D.G."/>
            <person name="Binkley G."/>
            <person name="Balakrishnan R."/>
            <person name="Costanzo M.C."/>
            <person name="Dwight S.S."/>
            <person name="Hitz B.C."/>
            <person name="Karra K."/>
            <person name="Nash R.S."/>
            <person name="Weng S."/>
            <person name="Wong E.D."/>
            <person name="Lloyd P."/>
            <person name="Skrzypek M.S."/>
            <person name="Miyasato S.R."/>
            <person name="Simison M."/>
            <person name="Cherry J.M."/>
        </authorList>
    </citation>
    <scope>GENOME REANNOTATION</scope>
    <source>
        <strain>ATCC 204508 / S288c</strain>
    </source>
</reference>
<reference key="3">
    <citation type="journal article" date="1997" name="J. Biol. Chem.">
        <title>The BST1 gene of Saccharomyces cerevisiae is the sphingosine-1-phosphate lyase.</title>
        <authorList>
            <person name="Saba J.D."/>
            <person name="Nara F."/>
            <person name="Bielawska A."/>
            <person name="Garrett S."/>
            <person name="Hannun Y.A."/>
        </authorList>
    </citation>
    <scope>FUNCTION</scope>
    <scope>CATALYTIC ACTIVITY</scope>
</reference>
<reference key="4">
    <citation type="journal article" date="1998" name="Biochem. Biophys. Res. Commun.">
        <title>Identification of the first mammalian sphingosine phosphate lyase gene and its functional expression in yeast.</title>
        <authorList>
            <person name="Zhou J."/>
            <person name="Saba J.D."/>
        </authorList>
    </citation>
    <scope>CATALYTIC ACTIVITY</scope>
</reference>
<reference key="5">
    <citation type="journal article" date="1999" name="Mol. Cell Biol. Res. Commun.">
        <title>The DPL1 gene is involved in mediating the response to nutrient deprivation in Saccharomyces cerevisiae.</title>
        <authorList>
            <person name="Gottlieb D."/>
            <person name="Heideman W."/>
            <person name="Saba J.D."/>
        </authorList>
    </citation>
    <scope>FUNCTION</scope>
    <scope>DISRUPTION PHENOTYPE</scope>
</reference>
<reference key="6">
    <citation type="journal article" date="2001" name="Curr. Genet.">
        <title>Elevation of endogenous sphingolipid long-chain base phosphates kills Saccharomyces cerevisiae cells.</title>
        <authorList>
            <person name="Zhang X."/>
            <person name="Skrzypek M.S."/>
            <person name="Lester R.L."/>
            <person name="Dickson R.C."/>
        </authorList>
    </citation>
    <scope>FUNCTION</scope>
</reference>
<reference key="7">
    <citation type="journal article" date="2003" name="Nature">
        <title>Global analysis of protein expression in yeast.</title>
        <authorList>
            <person name="Ghaemmaghami S."/>
            <person name="Huh W.-K."/>
            <person name="Bower K."/>
            <person name="Howson R.W."/>
            <person name="Belle A."/>
            <person name="Dephoure N."/>
            <person name="O'Shea E.K."/>
            <person name="Weissman J.S."/>
        </authorList>
    </citation>
    <scope>LEVEL OF PROTEIN EXPRESSION [LARGE SCALE ANALYSIS]</scope>
</reference>
<reference key="8">
    <citation type="journal article" date="2008" name="J. Biol. Chem.">
        <title>Identifying key residues of sphinganine-1-phosphate lyase for function in vivo and in vitro.</title>
        <authorList>
            <person name="Mukhopadhyay D."/>
            <person name="Howell K.S."/>
            <person name="Riezman H."/>
            <person name="Capitani G."/>
        </authorList>
    </citation>
    <scope>CATALYTIC ACTIVITY</scope>
    <scope>TOPOLOGY</scope>
    <scope>SUBCELLULAR LOCATION</scope>
    <scope>MUTAGENESIS OF 65-CYS--ASN-71 AND LYS-67</scope>
</reference>
<reference key="9">
    <citation type="journal article" date="2014" name="Nat. Commun.">
        <title>Identification of the phytosphingosine metabolic pathway leading to odd-numbered fatty acids.</title>
        <authorList>
            <person name="Kondo N."/>
            <person name="Ohno Y."/>
            <person name="Yamagata M."/>
            <person name="Obara T."/>
            <person name="Seki N."/>
            <person name="Kitamura T."/>
            <person name="Naganuma T."/>
            <person name="Kihara A."/>
        </authorList>
    </citation>
    <scope>FUNCTION</scope>
    <scope>DISRUPTION PHENOTYPE</scope>
    <scope>CATALYTIC ACTIVITY</scope>
    <scope>BIOPHYSICOCHEMICAL PROPERTIES</scope>
</reference>
<reference key="10">
    <citation type="journal article" date="2010" name="Structure">
        <title>Structure and function of sphingosine-1-phosphate lyase, a key enzyme of sphingolipid metabolism.</title>
        <authorList>
            <person name="Bourquin F."/>
            <person name="Riezman H."/>
            <person name="Capitani G."/>
            <person name="Grutter M.G."/>
        </authorList>
    </citation>
    <scope>X-RAY CRYSTALLOGRAPHY (3.15 ANGSTROMS) OF 103-589 IN COMPLEX WITH PYRIDOXAL PHOSPHATE</scope>
    <scope>CATALYTIC ACTIVITY</scope>
    <scope>FUNCTION</scope>
    <scope>COFACTOR</scope>
    <scope>SUBUNIT</scope>
    <scope>MUTAGENESIS OF ALA-172; TYR-174; HIS-198; LYS-380; LYS-386 AND TYR-554</scope>
</reference>
<name>SGPL_YEAST</name>
<keyword id="KW-0002">3D-structure</keyword>
<keyword id="KW-0256">Endoplasmic reticulum</keyword>
<keyword id="KW-0325">Glycoprotein</keyword>
<keyword id="KW-0443">Lipid metabolism</keyword>
<keyword id="KW-0456">Lyase</keyword>
<keyword id="KW-0472">Membrane</keyword>
<keyword id="KW-0663">Pyridoxal phosphate</keyword>
<keyword id="KW-1185">Reference proteome</keyword>
<keyword id="KW-0746">Sphingolipid metabolism</keyword>
<keyword id="KW-0812">Transmembrane</keyword>
<keyword id="KW-1133">Transmembrane helix</keyword>
<feature type="chain" id="PRO_0000147018" description="Sphingosine-1-phosphate lyase">
    <location>
        <begin position="1"/>
        <end position="589"/>
    </location>
</feature>
<feature type="topological domain" description="Lumenal" evidence="13">
    <location>
        <begin position="1"/>
        <end position="58"/>
    </location>
</feature>
<feature type="transmembrane region" description="Helical" evidence="1">
    <location>
        <begin position="59"/>
        <end position="76"/>
    </location>
</feature>
<feature type="topological domain" description="Cytoplasmic" evidence="13">
    <location>
        <begin position="77"/>
        <end position="589"/>
    </location>
</feature>
<feature type="modified residue" description="N6-(pyridoxal phosphate)lysine">
    <location>
        <position position="380"/>
    </location>
</feature>
<feature type="glycosylation site" description="N-linked (GlcNAc...) asparagine" evidence="2">
    <location>
        <position position="6"/>
    </location>
</feature>
<feature type="mutagenesis site" description="In Dpl1CKSN_LLLL; impairs the formation of higher oder oligomeric complexes and consequently reduces catalytic activity." evidence="6">
    <original>CYKLISN</original>
    <variation>LYLLILL</variation>
    <location>
        <begin position="65"/>
        <end position="71"/>
    </location>
</feature>
<feature type="mutagenesis site" description="Reduces catalytic activity." evidence="6">
    <original>K</original>
    <variation>L</variation>
    <location>
        <position position="67"/>
    </location>
</feature>
<feature type="mutagenesis site" description="Loss of enzyme activity." evidence="7">
    <original>A</original>
    <variation>P</variation>
    <location>
        <position position="172"/>
    </location>
</feature>
<feature type="mutagenesis site" description="Mildly decreased enzyme activity." evidence="7">
    <original>Y</original>
    <variation>F</variation>
    <location>
        <position position="174"/>
    </location>
</feature>
<feature type="mutagenesis site" description="Decreased enzyme activity." evidence="7">
    <original>H</original>
    <variation>A</variation>
    <location>
        <position position="198"/>
    </location>
</feature>
<feature type="mutagenesis site" description="Loss of enzyme activity." evidence="7">
    <original>K</original>
    <variation>A</variation>
    <location>
        <position position="380"/>
    </location>
</feature>
<feature type="mutagenesis site" description="Loss of enzyme activity." evidence="7">
    <original>K</original>
    <variation>A</variation>
    <location>
        <position position="386"/>
    </location>
</feature>
<feature type="mutagenesis site" description="Decreased enzyme activity." evidence="7">
    <original>Y</original>
    <variation>F</variation>
    <location>
        <position position="554"/>
    </location>
</feature>
<feature type="helix" evidence="17">
    <location>
        <begin position="145"/>
        <end position="157"/>
    </location>
</feature>
<feature type="helix" evidence="17">
    <location>
        <begin position="164"/>
        <end position="166"/>
    </location>
</feature>
<feature type="strand" evidence="17">
    <location>
        <begin position="169"/>
        <end position="172"/>
    </location>
</feature>
<feature type="helix" evidence="17">
    <location>
        <begin position="178"/>
        <end position="190"/>
    </location>
</feature>
<feature type="turn" evidence="17">
    <location>
        <begin position="199"/>
        <end position="201"/>
    </location>
</feature>
<feature type="helix" evidence="17">
    <location>
        <begin position="203"/>
        <end position="219"/>
    </location>
</feature>
<feature type="turn" evidence="17">
    <location>
        <begin position="224"/>
        <end position="226"/>
    </location>
</feature>
<feature type="strand" evidence="17">
    <location>
        <begin position="229"/>
        <end position="234"/>
    </location>
</feature>
<feature type="helix" evidence="17">
    <location>
        <begin position="235"/>
        <end position="253"/>
    </location>
</feature>
<feature type="strand" evidence="17">
    <location>
        <begin position="260"/>
        <end position="264"/>
    </location>
</feature>
<feature type="helix" evidence="17">
    <location>
        <begin position="269"/>
        <end position="277"/>
    </location>
</feature>
<feature type="strand" evidence="17">
    <location>
        <begin position="281"/>
        <end position="285"/>
    </location>
</feature>
<feature type="turn" evidence="17">
    <location>
        <begin position="289"/>
        <end position="291"/>
    </location>
</feature>
<feature type="turn" evidence="17">
    <location>
        <begin position="296"/>
        <end position="299"/>
    </location>
</feature>
<feature type="helix" evidence="17">
    <location>
        <begin position="300"/>
        <end position="302"/>
    </location>
</feature>
<feature type="strand" evidence="17">
    <location>
        <begin position="305"/>
        <end position="313"/>
    </location>
</feature>
<feature type="turn" evidence="17">
    <location>
        <begin position="317"/>
        <end position="319"/>
    </location>
</feature>
<feature type="turn" evidence="17">
    <location>
        <begin position="326"/>
        <end position="330"/>
    </location>
</feature>
<feature type="helix" evidence="17">
    <location>
        <begin position="331"/>
        <end position="334"/>
    </location>
</feature>
<feature type="strand" evidence="17">
    <location>
        <begin position="339"/>
        <end position="342"/>
    </location>
</feature>
<feature type="turn" evidence="17">
    <location>
        <begin position="343"/>
        <end position="346"/>
    </location>
</feature>
<feature type="helix" evidence="17">
    <location>
        <begin position="347"/>
        <end position="350"/>
    </location>
</feature>
<feature type="helix" evidence="17">
    <location>
        <begin position="351"/>
        <end position="353"/>
    </location>
</feature>
<feature type="turn" evidence="17">
    <location>
        <begin position="354"/>
        <end position="357"/>
    </location>
</feature>
<feature type="strand" evidence="17">
    <location>
        <begin position="373"/>
        <end position="377"/>
    </location>
</feature>
<feature type="turn" evidence="17">
    <location>
        <begin position="378"/>
        <end position="382"/>
    </location>
</feature>
<feature type="strand" evidence="17">
    <location>
        <begin position="389"/>
        <end position="392"/>
    </location>
</feature>
<feature type="helix" evidence="17">
    <location>
        <begin position="396"/>
        <end position="399"/>
    </location>
</feature>
<feature type="turn" evidence="17">
    <location>
        <begin position="400"/>
        <end position="402"/>
    </location>
</feature>
<feature type="strand" evidence="17">
    <location>
        <begin position="417"/>
        <end position="419"/>
    </location>
</feature>
<feature type="helix" evidence="17">
    <location>
        <begin position="425"/>
        <end position="463"/>
    </location>
</feature>
<feature type="strand" evidence="17">
    <location>
        <begin position="476"/>
        <end position="482"/>
    </location>
</feature>
<feature type="turn" evidence="17">
    <location>
        <begin position="484"/>
        <end position="487"/>
    </location>
</feature>
<feature type="helix" evidence="17">
    <location>
        <begin position="488"/>
        <end position="496"/>
    </location>
</feature>
<feature type="turn" evidence="17">
    <location>
        <begin position="497"/>
        <end position="499"/>
    </location>
</feature>
<feature type="strand" evidence="17">
    <location>
        <begin position="511"/>
        <end position="514"/>
    </location>
</feature>
<feature type="turn" evidence="17">
    <location>
        <begin position="517"/>
        <end position="520"/>
    </location>
</feature>
<feature type="helix" evidence="17">
    <location>
        <begin position="523"/>
        <end position="537"/>
    </location>
</feature>
<feature type="helix" evidence="17">
    <location>
        <begin position="567"/>
        <end position="575"/>
    </location>
</feature>
<accession>Q05567</accession>
<accession>D6VSS3</accession>